<protein>
    <recommendedName>
        <fullName evidence="1">Ketol-acid reductoisomerase (NADP(+))</fullName>
        <shortName evidence="1">KARI</shortName>
        <ecNumber evidence="1">1.1.1.86</ecNumber>
    </recommendedName>
    <alternativeName>
        <fullName evidence="1">Acetohydroxy-acid isomeroreductase</fullName>
        <shortName evidence="1">AHIR</shortName>
    </alternativeName>
    <alternativeName>
        <fullName evidence="1">Alpha-keto-beta-hydroxylacyl reductoisomerase</fullName>
    </alternativeName>
    <alternativeName>
        <fullName evidence="1">Ketol-acid reductoisomerase type 1</fullName>
    </alternativeName>
    <alternativeName>
        <fullName evidence="1">Ketol-acid reductoisomerase type I</fullName>
    </alternativeName>
</protein>
<accession>A9M637</accession>
<keyword id="KW-0028">Amino-acid biosynthesis</keyword>
<keyword id="KW-0100">Branched-chain amino acid biosynthesis</keyword>
<keyword id="KW-0460">Magnesium</keyword>
<keyword id="KW-0479">Metal-binding</keyword>
<keyword id="KW-0521">NADP</keyword>
<keyword id="KW-0560">Oxidoreductase</keyword>
<keyword id="KW-1185">Reference proteome</keyword>
<name>ILVC_BRUC2</name>
<sequence>MRVYYDRDADVNLIKSKKVVIVGYGSQGRAHALNLKDSGAANVRVALREGSATVQKAQADGFEVMNVADAAKWADLMMMATPDELQADIYRDHIHNNLRDGAAIAFAHGLNVHFGLIEPKKTVDVVMIAPKGPGHTVRGEYQKGGGVPCLIAIHQDASGNAHDLALSYASGVGGGRSGVIETTFKEECETDLFGEQAVLCGGVVELIRTGFEVLVEAGYAPEMAYFECLNEMKLIVDLIYEGGIANMNYSISNTAEWGEYVTGPRIITAETKAEMKRVLKDIQTGKFTSDWMQEWKAGAARFKGIRRLNDAHQIEEVGGKLRAMMPWIEKNKLVDKARN</sequence>
<reference key="1">
    <citation type="submission" date="2007-10" db="EMBL/GenBank/DDBJ databases">
        <title>Brucella canis ATCC 23365 whole genome shotgun sequencing project.</title>
        <authorList>
            <person name="Setubal J.C."/>
            <person name="Bowns C."/>
            <person name="Boyle S."/>
            <person name="Crasta O.R."/>
            <person name="Czar M.J."/>
            <person name="Dharmanolla C."/>
            <person name="Gillespie J.J."/>
            <person name="Kenyon R.W."/>
            <person name="Lu J."/>
            <person name="Mane S."/>
            <person name="Mohapatra S."/>
            <person name="Nagrani S."/>
            <person name="Purkayastha A."/>
            <person name="Rajasimha H.K."/>
            <person name="Shallom J.M."/>
            <person name="Shallom S."/>
            <person name="Shukla M."/>
            <person name="Snyder E.E."/>
            <person name="Sobral B.W."/>
            <person name="Wattam A.R."/>
            <person name="Will R."/>
            <person name="Williams K."/>
            <person name="Yoo H."/>
            <person name="Bruce D."/>
            <person name="Detter C."/>
            <person name="Munk C."/>
            <person name="Brettin T.S."/>
        </authorList>
    </citation>
    <scope>NUCLEOTIDE SEQUENCE [LARGE SCALE GENOMIC DNA]</scope>
    <source>
        <strain>ATCC 23365 / NCTC 10854 / RM-666</strain>
    </source>
</reference>
<feature type="chain" id="PRO_1000080619" description="Ketol-acid reductoisomerase (NADP(+))">
    <location>
        <begin position="1"/>
        <end position="339"/>
    </location>
</feature>
<feature type="domain" description="KARI N-terminal Rossmann" evidence="2">
    <location>
        <begin position="1"/>
        <end position="182"/>
    </location>
</feature>
<feature type="domain" description="KARI C-terminal knotted" evidence="3">
    <location>
        <begin position="183"/>
        <end position="328"/>
    </location>
</feature>
<feature type="active site" evidence="1">
    <location>
        <position position="108"/>
    </location>
</feature>
<feature type="binding site" evidence="1">
    <location>
        <begin position="24"/>
        <end position="27"/>
    </location>
    <ligand>
        <name>NADP(+)</name>
        <dbReference type="ChEBI" id="CHEBI:58349"/>
    </ligand>
</feature>
<feature type="binding site" evidence="1">
    <location>
        <position position="48"/>
    </location>
    <ligand>
        <name>NADP(+)</name>
        <dbReference type="ChEBI" id="CHEBI:58349"/>
    </ligand>
</feature>
<feature type="binding site" evidence="1">
    <location>
        <position position="51"/>
    </location>
    <ligand>
        <name>NADP(+)</name>
        <dbReference type="ChEBI" id="CHEBI:58349"/>
    </ligand>
</feature>
<feature type="binding site" evidence="1">
    <location>
        <position position="53"/>
    </location>
    <ligand>
        <name>NADP(+)</name>
        <dbReference type="ChEBI" id="CHEBI:58349"/>
    </ligand>
</feature>
<feature type="binding site" evidence="1">
    <location>
        <begin position="83"/>
        <end position="86"/>
    </location>
    <ligand>
        <name>NADP(+)</name>
        <dbReference type="ChEBI" id="CHEBI:58349"/>
    </ligand>
</feature>
<feature type="binding site" evidence="1">
    <location>
        <position position="134"/>
    </location>
    <ligand>
        <name>NADP(+)</name>
        <dbReference type="ChEBI" id="CHEBI:58349"/>
    </ligand>
</feature>
<feature type="binding site" evidence="1">
    <location>
        <position position="191"/>
    </location>
    <ligand>
        <name>Mg(2+)</name>
        <dbReference type="ChEBI" id="CHEBI:18420"/>
        <label>1</label>
    </ligand>
</feature>
<feature type="binding site" evidence="1">
    <location>
        <position position="191"/>
    </location>
    <ligand>
        <name>Mg(2+)</name>
        <dbReference type="ChEBI" id="CHEBI:18420"/>
        <label>2</label>
    </ligand>
</feature>
<feature type="binding site" evidence="1">
    <location>
        <position position="195"/>
    </location>
    <ligand>
        <name>Mg(2+)</name>
        <dbReference type="ChEBI" id="CHEBI:18420"/>
        <label>1</label>
    </ligand>
</feature>
<feature type="binding site" evidence="1">
    <location>
        <position position="227"/>
    </location>
    <ligand>
        <name>Mg(2+)</name>
        <dbReference type="ChEBI" id="CHEBI:18420"/>
        <label>2</label>
    </ligand>
</feature>
<feature type="binding site" evidence="1">
    <location>
        <position position="231"/>
    </location>
    <ligand>
        <name>Mg(2+)</name>
        <dbReference type="ChEBI" id="CHEBI:18420"/>
        <label>2</label>
    </ligand>
</feature>
<feature type="binding site" evidence="1">
    <location>
        <position position="252"/>
    </location>
    <ligand>
        <name>substrate</name>
    </ligand>
</feature>
<comment type="function">
    <text evidence="1">Involved in the biosynthesis of branched-chain amino acids (BCAA). Catalyzes an alkyl-migration followed by a ketol-acid reduction of (S)-2-acetolactate (S2AL) to yield (R)-2,3-dihydroxy-isovalerate. In the isomerase reaction, S2AL is rearranged via a Mg-dependent methyl migration to produce 3-hydroxy-3-methyl-2-ketobutyrate (HMKB). In the reductase reaction, this 2-ketoacid undergoes a metal-dependent reduction by NADPH to yield (R)-2,3-dihydroxy-isovalerate.</text>
</comment>
<comment type="catalytic activity">
    <reaction evidence="1">
        <text>(2R)-2,3-dihydroxy-3-methylbutanoate + NADP(+) = (2S)-2-acetolactate + NADPH + H(+)</text>
        <dbReference type="Rhea" id="RHEA:22068"/>
        <dbReference type="ChEBI" id="CHEBI:15378"/>
        <dbReference type="ChEBI" id="CHEBI:49072"/>
        <dbReference type="ChEBI" id="CHEBI:57783"/>
        <dbReference type="ChEBI" id="CHEBI:58349"/>
        <dbReference type="ChEBI" id="CHEBI:58476"/>
        <dbReference type="EC" id="1.1.1.86"/>
    </reaction>
</comment>
<comment type="catalytic activity">
    <reaction evidence="1">
        <text>(2R,3R)-2,3-dihydroxy-3-methylpentanoate + NADP(+) = (S)-2-ethyl-2-hydroxy-3-oxobutanoate + NADPH + H(+)</text>
        <dbReference type="Rhea" id="RHEA:13493"/>
        <dbReference type="ChEBI" id="CHEBI:15378"/>
        <dbReference type="ChEBI" id="CHEBI:49256"/>
        <dbReference type="ChEBI" id="CHEBI:49258"/>
        <dbReference type="ChEBI" id="CHEBI:57783"/>
        <dbReference type="ChEBI" id="CHEBI:58349"/>
        <dbReference type="EC" id="1.1.1.86"/>
    </reaction>
</comment>
<comment type="cofactor">
    <cofactor evidence="1">
        <name>Mg(2+)</name>
        <dbReference type="ChEBI" id="CHEBI:18420"/>
    </cofactor>
    <text evidence="1">Binds 2 magnesium ions per subunit.</text>
</comment>
<comment type="pathway">
    <text evidence="1">Amino-acid biosynthesis; L-isoleucine biosynthesis; L-isoleucine from 2-oxobutanoate: step 2/4.</text>
</comment>
<comment type="pathway">
    <text evidence="1">Amino-acid biosynthesis; L-valine biosynthesis; L-valine from pyruvate: step 2/4.</text>
</comment>
<comment type="similarity">
    <text evidence="1">Belongs to the ketol-acid reductoisomerase family.</text>
</comment>
<organism>
    <name type="scientific">Brucella canis (strain ATCC 23365 / NCTC 10854 / RM-666)</name>
    <dbReference type="NCBI Taxonomy" id="483179"/>
    <lineage>
        <taxon>Bacteria</taxon>
        <taxon>Pseudomonadati</taxon>
        <taxon>Pseudomonadota</taxon>
        <taxon>Alphaproteobacteria</taxon>
        <taxon>Hyphomicrobiales</taxon>
        <taxon>Brucellaceae</taxon>
        <taxon>Brucella/Ochrobactrum group</taxon>
        <taxon>Brucella</taxon>
    </lineage>
</organism>
<dbReference type="EC" id="1.1.1.86" evidence="1"/>
<dbReference type="EMBL" id="CP000872">
    <property type="protein sequence ID" value="ABX62442.1"/>
    <property type="molecule type" value="Genomic_DNA"/>
</dbReference>
<dbReference type="RefSeq" id="WP_004688531.1">
    <property type="nucleotide sequence ID" value="NC_010103.1"/>
</dbReference>
<dbReference type="SMR" id="A9M637"/>
<dbReference type="GeneID" id="97533405"/>
<dbReference type="KEGG" id="bcs:BCAN_A1411"/>
<dbReference type="HOGENOM" id="CLU_033821_0_1_5"/>
<dbReference type="PhylomeDB" id="A9M637"/>
<dbReference type="UniPathway" id="UPA00047">
    <property type="reaction ID" value="UER00056"/>
</dbReference>
<dbReference type="UniPathway" id="UPA00049">
    <property type="reaction ID" value="UER00060"/>
</dbReference>
<dbReference type="PRO" id="PR:A9M637"/>
<dbReference type="Proteomes" id="UP000001385">
    <property type="component" value="Chromosome I"/>
</dbReference>
<dbReference type="GO" id="GO:0005829">
    <property type="term" value="C:cytosol"/>
    <property type="evidence" value="ECO:0007669"/>
    <property type="project" value="TreeGrafter"/>
</dbReference>
<dbReference type="GO" id="GO:0004455">
    <property type="term" value="F:ketol-acid reductoisomerase activity"/>
    <property type="evidence" value="ECO:0007669"/>
    <property type="project" value="UniProtKB-UniRule"/>
</dbReference>
<dbReference type="GO" id="GO:0000287">
    <property type="term" value="F:magnesium ion binding"/>
    <property type="evidence" value="ECO:0007669"/>
    <property type="project" value="UniProtKB-UniRule"/>
</dbReference>
<dbReference type="GO" id="GO:0050661">
    <property type="term" value="F:NADP binding"/>
    <property type="evidence" value="ECO:0007669"/>
    <property type="project" value="InterPro"/>
</dbReference>
<dbReference type="GO" id="GO:0009097">
    <property type="term" value="P:isoleucine biosynthetic process"/>
    <property type="evidence" value="ECO:0007669"/>
    <property type="project" value="UniProtKB-UniRule"/>
</dbReference>
<dbReference type="GO" id="GO:0009099">
    <property type="term" value="P:L-valine biosynthetic process"/>
    <property type="evidence" value="ECO:0007669"/>
    <property type="project" value="UniProtKB-UniRule"/>
</dbReference>
<dbReference type="FunFam" id="3.40.50.720:FF:000023">
    <property type="entry name" value="Ketol-acid reductoisomerase (NADP(+))"/>
    <property type="match status" value="1"/>
</dbReference>
<dbReference type="Gene3D" id="6.10.240.10">
    <property type="match status" value="1"/>
</dbReference>
<dbReference type="Gene3D" id="3.40.50.720">
    <property type="entry name" value="NAD(P)-binding Rossmann-like Domain"/>
    <property type="match status" value="1"/>
</dbReference>
<dbReference type="HAMAP" id="MF_00435">
    <property type="entry name" value="IlvC"/>
    <property type="match status" value="1"/>
</dbReference>
<dbReference type="InterPro" id="IPR008927">
    <property type="entry name" value="6-PGluconate_DH-like_C_sf"/>
</dbReference>
<dbReference type="InterPro" id="IPR013023">
    <property type="entry name" value="KARI"/>
</dbReference>
<dbReference type="InterPro" id="IPR000506">
    <property type="entry name" value="KARI_C"/>
</dbReference>
<dbReference type="InterPro" id="IPR013116">
    <property type="entry name" value="KARI_N"/>
</dbReference>
<dbReference type="InterPro" id="IPR014359">
    <property type="entry name" value="KARI_prok"/>
</dbReference>
<dbReference type="InterPro" id="IPR036291">
    <property type="entry name" value="NAD(P)-bd_dom_sf"/>
</dbReference>
<dbReference type="NCBIfam" id="TIGR00465">
    <property type="entry name" value="ilvC"/>
    <property type="match status" value="1"/>
</dbReference>
<dbReference type="NCBIfam" id="NF004017">
    <property type="entry name" value="PRK05479.1"/>
    <property type="match status" value="1"/>
</dbReference>
<dbReference type="NCBIfam" id="NF009940">
    <property type="entry name" value="PRK13403.1"/>
    <property type="match status" value="1"/>
</dbReference>
<dbReference type="PANTHER" id="PTHR21371">
    <property type="entry name" value="KETOL-ACID REDUCTOISOMERASE, MITOCHONDRIAL"/>
    <property type="match status" value="1"/>
</dbReference>
<dbReference type="PANTHER" id="PTHR21371:SF1">
    <property type="entry name" value="KETOL-ACID REDUCTOISOMERASE, MITOCHONDRIAL"/>
    <property type="match status" value="1"/>
</dbReference>
<dbReference type="Pfam" id="PF01450">
    <property type="entry name" value="KARI_C"/>
    <property type="match status" value="1"/>
</dbReference>
<dbReference type="Pfam" id="PF07991">
    <property type="entry name" value="KARI_N"/>
    <property type="match status" value="1"/>
</dbReference>
<dbReference type="PIRSF" id="PIRSF000116">
    <property type="entry name" value="IlvC_gammaproteo"/>
    <property type="match status" value="1"/>
</dbReference>
<dbReference type="SUPFAM" id="SSF48179">
    <property type="entry name" value="6-phosphogluconate dehydrogenase C-terminal domain-like"/>
    <property type="match status" value="1"/>
</dbReference>
<dbReference type="SUPFAM" id="SSF51735">
    <property type="entry name" value="NAD(P)-binding Rossmann-fold domains"/>
    <property type="match status" value="1"/>
</dbReference>
<dbReference type="PROSITE" id="PS51851">
    <property type="entry name" value="KARI_C"/>
    <property type="match status" value="1"/>
</dbReference>
<dbReference type="PROSITE" id="PS51850">
    <property type="entry name" value="KARI_N"/>
    <property type="match status" value="1"/>
</dbReference>
<evidence type="ECO:0000255" key="1">
    <source>
        <dbReference type="HAMAP-Rule" id="MF_00435"/>
    </source>
</evidence>
<evidence type="ECO:0000255" key="2">
    <source>
        <dbReference type="PROSITE-ProRule" id="PRU01197"/>
    </source>
</evidence>
<evidence type="ECO:0000255" key="3">
    <source>
        <dbReference type="PROSITE-ProRule" id="PRU01198"/>
    </source>
</evidence>
<gene>
    <name evidence="1" type="primary">ilvC</name>
    <name type="ordered locus">BCAN_A1411</name>
</gene>
<proteinExistence type="inferred from homology"/>